<evidence type="ECO:0000255" key="1"/>
<evidence type="ECO:0000255" key="2">
    <source>
        <dbReference type="PROSITE-ProRule" id="PRU00258"/>
    </source>
</evidence>
<evidence type="ECO:0000255" key="3">
    <source>
        <dbReference type="PROSITE-ProRule" id="PRU01348"/>
    </source>
</evidence>
<evidence type="ECO:0000255" key="4">
    <source>
        <dbReference type="PROSITE-ProRule" id="PRU01363"/>
    </source>
</evidence>
<evidence type="ECO:0000256" key="5">
    <source>
        <dbReference type="SAM" id="MobiDB-lite"/>
    </source>
</evidence>
<evidence type="ECO:0000269" key="6">
    <source>
    </source>
</evidence>
<evidence type="ECO:0000269" key="7">
    <source>
    </source>
</evidence>
<evidence type="ECO:0000269" key="8">
    <source>
    </source>
</evidence>
<evidence type="ECO:0000303" key="9">
    <source>
    </source>
</evidence>
<evidence type="ECO:0000305" key="10"/>
<evidence type="ECO:0000305" key="11">
    <source>
    </source>
</evidence>
<evidence type="ECO:0000305" key="12">
    <source>
    </source>
</evidence>
<protein>
    <recommendedName>
        <fullName evidence="9">PKS-NRPS hybrid synthetase cheA</fullName>
        <shortName evidence="9">PKS-NRPS cheA</shortName>
        <ecNumber evidence="11">2.3.1.-</ecNumber>
        <ecNumber evidence="11">6.3.2.-</ecNumber>
    </recommendedName>
    <alternativeName>
        <fullName evidence="9">Chaetoglobosin A biosynthesis cluster protein A</fullName>
    </alternativeName>
    <alternativeName>
        <fullName evidence="10">Prochaetoglobin I synthase</fullName>
    </alternativeName>
</protein>
<proteinExistence type="evidence at transcript level"/>
<organism>
    <name type="scientific">Chaetomium globosum (strain ATCC 6205 / CBS 148.51 / DSM 1962 / NBRC 6347 / NRRL 1970)</name>
    <name type="common">Soil fungus</name>
    <dbReference type="NCBI Taxonomy" id="306901"/>
    <lineage>
        <taxon>Eukaryota</taxon>
        <taxon>Fungi</taxon>
        <taxon>Dikarya</taxon>
        <taxon>Ascomycota</taxon>
        <taxon>Pezizomycotina</taxon>
        <taxon>Sordariomycetes</taxon>
        <taxon>Sordariomycetidae</taxon>
        <taxon>Sordariales</taxon>
        <taxon>Chaetomiaceae</taxon>
        <taxon>Chaetomium</taxon>
    </lineage>
</organism>
<reference key="1">
    <citation type="journal article" date="2015" name="Genome Announc.">
        <title>Draft genome sequence of the cellulolytic fungus Chaetomium globosum.</title>
        <authorList>
            <person name="Cuomo C.A."/>
            <person name="Untereiner W.A."/>
            <person name="Ma L.-J."/>
            <person name="Grabherr M."/>
            <person name="Birren B.W."/>
        </authorList>
    </citation>
    <scope>NUCLEOTIDE SEQUENCE [LARGE SCALE GENOMIC DNA]</scope>
    <source>
        <strain>ATCC 6205 / CBS 148.51 / DSM 1962 / NBRC 6347 / NRRL 1970</strain>
    </source>
</reference>
<reference key="2">
    <citation type="journal article" date="2013" name="J. Am. Chem. Soc.">
        <title>Combinatorial generation of complexity by redox enzymes in the chaetoglobosin A biosynthesis.</title>
        <authorList>
            <person name="Ishiuchi K."/>
            <person name="Nakazawa T."/>
            <person name="Yagishita F."/>
            <person name="Mino T."/>
            <person name="Noguchi H."/>
            <person name="Hotta K."/>
            <person name="Watanabe K."/>
        </authorList>
    </citation>
    <scope>FUNCTION</scope>
    <scope>DISRUPTION PHENOTYPE</scope>
    <scope>PATHWAY</scope>
</reference>
<reference key="3">
    <citation type="journal article" date="2021" name="Fungal Biol.">
        <title>Functional analysis of a chaetoglobosin A biosynthetic regulator in Chaetomium globosum.</title>
        <authorList>
            <person name="Cheng M."/>
            <person name="Zhao S."/>
            <person name="Liu H."/>
            <person name="Liu Y."/>
            <person name="Lin C."/>
            <person name="Song J."/>
            <person name="Thawai C."/>
            <person name="Charoensettasilp S."/>
            <person name="Yang Q."/>
        </authorList>
    </citation>
    <scope>FUNCTION</scope>
    <scope>INDUCTION</scope>
</reference>
<reference key="4">
    <citation type="journal article" date="2022" name="Synth. Syst. Biotechnol.">
        <title>CgVeA, a light signaling responsive regulator, is involved in regulation of chaetoglobosin A biosynthesis and conidia development in Chaetomium globosum.</title>
        <authorList>
            <person name="Wang Z."/>
            <person name="Zhao S."/>
            <person name="Zhang K."/>
            <person name="Lin C."/>
            <person name="Ru X."/>
            <person name="Yang Q."/>
        </authorList>
    </citation>
    <scope>INDUCTION</scope>
</reference>
<keyword id="KW-0012">Acyltransferase</keyword>
<keyword id="KW-0413">Isomerase</keyword>
<keyword id="KW-0436">Ligase</keyword>
<keyword id="KW-0489">Methyltransferase</keyword>
<keyword id="KW-0511">Multifunctional enzyme</keyword>
<keyword id="KW-0521">NADP</keyword>
<keyword id="KW-0560">Oxidoreductase</keyword>
<keyword id="KW-0596">Phosphopantetheine</keyword>
<keyword id="KW-0597">Phosphoprotein</keyword>
<keyword id="KW-1185">Reference proteome</keyword>
<keyword id="KW-0677">Repeat</keyword>
<keyword id="KW-0808">Transferase</keyword>
<comment type="function">
    <text evidence="6 7 12">PKS-NRPS hybrid synthetase; part of the gene cluster that mediates the biosynthesis of chaetoglobosin A which has a unique inhibitory activity against actin polymerization in mammalian cells (PubMed:23611317, PubMed:33622536). Chaetoglobosin A and its intermediates are involved in the morphological differentiation of C.globosum (PubMed:33622536). The first step of the pathway is the synthesis of prochaetoglobosin I via condensation of one acetyl-CoA, 8 malonyl-CoA, and a L-tryptophan molecule by the PKS-NRPS hybrid synthetase cheA, followed by reduction of backbone double bond to install desired geometry by the enoyl reductase cheB (PubMed:23611317). Further multiple oxidation steps performed by the cytochrome P450 monooxygenases cheE and cheG, as well as by the FAD-linked oxidoreductase cheF, lead to the formation of chaetoglobosin A (PubMed:23611317). Depending on the order of action of these reductases, distinct intermediates can be identified (PubMed:23611317). Within the pathway, the cytochrome P450 monooxygenase cheE catalyzes a stereospecific epoxidation on prochaetoglobosin I, cytoglobosin D, and chaetoglobosin J intermediates (PubMed:23611317). The FAD-linked oxidoreductase cheF performs dehydrogenation of the C-20 hydroxyl groups in the 20-dihyrochaetoglobosin A and cytoglobosin D intermediates (PubMed:23611317). Finally, the cytochrome P450 monooxygenase cheG can catalyze the stereospecific dihydroxylation of prochaetoglobosin I and prochaetoglobosin IV at C-19 and C-20, respectively (PubMed:23611317). The Diels-Alderase cheD may play a role in the post-PKS-NRPS biosynthetic steps catalyzing Diels-Alder cyclization (Probable).</text>
</comment>
<comment type="pathway">
    <text evidence="6">Secondary metabolite biosynthesis.</text>
</comment>
<comment type="induction">
    <text evidence="7 8">Expression is positively regulated by the cluster-specific transcription factor cheR that binds directly to an asymmetric direct repeat present in the promoter (PubMed:33622536). Expression is also regulated by the developmental and secondary metabolism regulator veA, but this regulation seems to be indirect, probably via cheR (PubMed:35949485).</text>
</comment>
<comment type="disruption phenotype">
    <text evidence="6">Abolishes the production of chaetoglobosin A and 20-dihyrochaetoglobosin A (PubMed:23611317).</text>
</comment>
<comment type="similarity">
    <text evidence="10">In the C-terminal section; belongs to the NRP synthetase family.</text>
</comment>
<gene>
    <name evidence="9" type="primary">cheA</name>
    <name type="ORF">CHGG_01239</name>
</gene>
<name>CHEA_CHAGB</name>
<sequence length="4699" mass="510655">MSDNDDEWNGFSDDNGEDDGPPEPGRPSQIDGQPWDVPDSALLQGDVIPNPKDSDFATDFAKIEELQGAINAWARSRGFAVVRRHGRNKQDGLYTRFDILCDRFGSPRAPRGAGVRETATRKCDCKWKAAASRTKDGWRFHSHPDPQHSVHNHGPSLHPSAHTQHRMSNSESLDTIAELSNHASIRAREIRSVVNQEHDTIYTRKDIYNVRAKMRKVNLDGYTAAGALIKALDNVDGDTANHYEVEWADAAETIFCSLVWGFESCLEATSIYHDCMLIDLTYNTNYMGMPLYQVNCLTSVGKTLSTMFGLVSDETTQTFRWLMKATKKLRDKFNIPEPAVIVTDHCKELKQAISEVFPDSQQQTCIFHVIKNVMLNTKRKFKYPGRDEVDSEDEEYRADFEDYDGVSPQERAAMEKDHAERLLSRNTSTSKVTKPISHDPRGVEEMFKAMQWMSCRDQWAHCYTRHYRNFGVRTTSPTESNNMSIKSYLINGRSSAYSLVSVSQDLCKEQVQQNVEEMAKQAIRARHDFLSRPWLGALPLRVSYKALDLIVGEYRRAKAAMPSTRPSQSIRRPLEPCHPDTCTATIQYSIPCRHDIYKKLAEGERLELREVHTHWHLQMSLVKPPLPSVEDNVADPKIVENRKGRPKNSARPLPDGLGIPSSPKTPRSQRRDGTQGSQGSQGRRTPGSTPGPPRGNAPRLQPSIRRVLSAHETVEEPRPPQAAPKRRGRPPGSKNKKKDQAPAPAESQLSAAERAEPRTTLVIASAPRRGLRAAPAAETTASEKRKAQAGGDSAPAPKRTRATASTPRAQSDQGTGNVAIPSLPAPAGAPGARVTRSGRAVRLTAKAAKAASGGRISYFFDWHGPSITIDTACSSSLIAVHQAVQSLRNGEVPLAIAAGANLLLGPSQYVAESKLKMLSPGGLSRMWDEEADGYARGDGFASVVLKPLKDAIRDGDRIECIIRETGSNQDGRTQGITMPSPIAQSALIRETYQRAGLDLSRPADRPQYFEAHGTGTPAGDPVESEAISTAFFGPDSRFKRQPGDAKLLVGSIKTVLGHTEGTAGLASLIKVSLALQNGKVPPNLHFNRLSPSVKPHYQNLQIPTSLLDWPEVPEGGVRRASVNSFGFGGANAHAILEAYTPATAKELLTAPSPFSFAPLLFSAASDTALAANIAAHADFVEKASDVNLGDIAHTLHSHRSALAKRAVFAAASRSDLVARLRGHAAEDKAKSDAAAPLGRSLSSRPRTLGVFTGQGAQWPRMGAELIERSEAVSRIVDELEASLATLPQQDRPSWSLRAEMLAPAASSQIGKAEFSQPLCTALQIILVDVLREAGVVFDAVVGHSSGEIAAAYAAGVVTASEAMRIAYYRGFHTHRCGGAGGQSGAMMAVGTSFEDAQELCALDAFKGRLSVAASNSSSSITLSGDADAVAEAAVVCEEENKFHRALRVDKAYHSHHMVPCLGPYVESLRGACNISPTPQNGSGSGCVWISSVYATDIADVQDDIGSEYWAKNMGQTVLFSQALETALRERGPFDQVVELGAHPALKGPAMQVIEETTREKIPYVGTLLRQRDATEALAESLGALWAANGRASVDLAKYEAFLSGGRVHQVLADELPRYQWDHQTAYYHDSRLLKALRTSSIKPNELLGTRIMDNSPSEARWRNRLSANEVPWLRDHRVQNQAIFPGAGYIATGLEAVRELLGNEPLLLVNMQDIFIGQALIIPEPGSVETLVSVTNIVRGADKITARFTFFADEGRADSVSMAEKASANLIISLGEPDPDALPPRPEPGRDYHMLDVPAERFYDAVGSLGFGYTGPFRALSGLSRKMDYATGSVVQPEPTEGFGRLLVHPAALDAAVQSIILAYCFPGDTRLRTTHLPTRIDSLRVNIPLCEADRSAQTPFRSSVPSGGGVELSDINGDVDLYDENGSTLIQLQGLHTKPLVPPTPSTDLPLFTEWVWGPLSPHGRDLTLRGAEAEAERDLFNDLERVAYFYLRRLDAAIPPEQRVDLPAHQTALFRIDLELMHAVGENLASVIRGEMNMLEPMMQDNKLNRFYIEALGMSRYLEELSRMAAQISHRYPQMHVLEVGAGTGGATKVLLRHLEGGFESYAYTDISSGFFPSARETFEAYTDKMTFKTLDIEKDIAEQGYQEESFDLVIANLVVHATKDLQVTVRNLRRLVKPGGYLLLLEITDNDPLRFGFIFGGLPGWWLGEEEDRGLSPCVEVATWDRILRNTGFSGADEVTVRDPNNPLSVILTQALDDRVELLRQPLTAQPSSEGVQLDSLTILGAETGRAAELARDVEALLSPYFRRSRTVSSLVGLGPQDLPLMGTVLSLVELDTPVFKGITPERLRGFQQVFQQSKNVLWVTTGYKADDPYSAMVYGVGRNVVLEMSHLRLQFLDLETLAAADPRILAECVLRFEFSDMWEQAADKRPLLWTTEPDLAYEEGRLRMPRIKVSKERNARYNSSRRPVTKEVDPIASPLALQPLDDTGKDYALVAPSGRLAAGTRLDTVKIRVAKSILRAVRVLATNYLFVVAGFAENGTSPLVAVSDSQASVVEVDRAWTMPIQHSEGAADTAVETAMEQAMVALYDGLLAQALLQDVEHGRALAVLDASPSLTRALRSSGRYRGVQVVSLASKAAASGVPGTIPVHPRESVRSLKSKLPAHVDKLANFSDRADLARTVASCLPTRCDFQDWQSLTRPGAVITERTLLGLADCEVPSVLRAAWAHVKVDQRSTDLAGVLRADPTSLSQAAVVPGDAANQVCLVDWARRPTLPARIQPLVTTITFSPDKTYWLVGLTGGLGQSLCRWMVERGARYLVLTSRNPKLDPRWLAGVEALGAVVRAFPNDITSRDAVQAAYRTITATMPPIGGVAHGAMVLHDSMFAEVTVEKMDKVLRPKVDGAIHLDEIFYDAPLDWFVYLSSVVVITGNKGQGIYAAANMFLNSMTMQRRKRGVPAAAVNIGAVLGNGYVTRELNHQQQTFLQEVGNNWLSEQDFLTIFAEGVAASRVDSTEAVEITTGLRMLSSRDENVTWATNPKFQYLVQAHVASAAAKLAKSSNVSLKKQLEDVKTIQDASEILEDAYTSKLRAVLQIAPDRDVLSAALDDLGMDSLVAVEIRSWVLKELSADITVLEVLNSGTAGALFELVKERALASLALLDSGEQPDQVKSPRAAPLDLVSGHGGGDRRPSTVVDVADTSLDQGSSWDSGSLREASNGHDSTILSSTAPSSPISKPAGVDASDLEQTPIPEDSEEPVASSPDAGLARSVPLSFSQARFWFLRHFLPDQSAFNITSVVRMHGRPDMERLARAIKAVGNHHEALRTAFRVGEGNEPVQAVLKETVLVLEHRDISDADDVTPAYEAVQRHVYDLEAGETMRLQVLTLSPTEHFLILGYHHINMDGISFEVLFNDLQKAYRGVEFTPGVAQYPAFSILERDEYRLGKWKTELDFWKAEFAHLPEPLPLLPLSQRASRPAVAQYATLRVERRIPADLSATIKSAARKFGAGVFAFYLAVLKALVVRYVDVDNLCIGLADANRRRAEVLESIGLYLNLVPLNVPCDRTQPFSDALREMHTKYQRAFANARVPFDVLLHELDVPRSSSHPPLFQVFMNYRQGVSEAREFCDCECEGELVSGGQLAYDIAVDVVENPGGETNVMLSVQQSLYNAASAEVLLDSFFSLMEGFAANPISRISKPPLHRQTAIEQAVELANGPILDLAWAPTVSHRIDEMIQAHPDKLALTDGQGTDLTYAQLGASVNGIVQGLREVRASNVVGVLQHPTPAAICSILAVLKAGLTYVPLDPRVGPAKLAAIVGEAKPSCILVDDATEVDIGSFSLDDTAKVRNVASLPPSEDRLPIEAVPAGTAVLHCAAASRRPVSELAVQEGSETILQQTAFSFDISLFQSLLALTTASTLVVAPREVRGDPAALAKLMLIAGVTVTAATPTEYVHLIGHGASQLKQNDKWRLALCGGEKLSDQVVSGFRSLNRPELTLVNDYGPAEATFRCSTTVVPYQEEDGQELARTTPLKTCANSAVYILGDDMKPLPVGLTGEVCVGGAGVGLGYLNNHQLSAQRFIANPYASPAFVARGWTTMHPTGDRGRLSPDGGLILEGRIDGDTQVKLGGIRIELEEVERAVINDSQGAIREAAVSVRTDEASGTEYLVAHAVMQDRADSTPAHVDWLQQLQSRLSLPRYMAPSAIVPVAALPLSVSGKLDRRALRELPVATALTTQTPAEESEGLPAMQHLIKQLWEQVIPNGLLAGRDIGPKTDFFNVGGSSLLLVQLQALLREQFSVAPLVQELFQASTLETMAALVASGSGSSTQQGSDTTPAPIDWEAEAGLLQDAYYNSTTEKKQSGPAVANPPKVVVLTGSTGFLGRHLLERLLRTSHIEKVYCVAVRKQPAELPGIFNDPRVEVFPGDLSLAGLGLSDADTERVFSTADAVLHNGADVSFMKTYISLRPTNVAATQQLAALAQRQGRRIPFHFVSSAAVTQLTPLDEVGEVSVAAYPPAVSSPSSSSSAGGYVAAKWVSERHLEQVAQAHGLPVTIHRPSSILGNDASDVDLMGNLFRYVERLQAVPESRDWKGYFDLISVHTVAAAIVKAVVAAREEEQEEEEGHEKGGPAGRVRYQYEAGEIVYPLSTVADMGELEAAGFVLKTLPLEEWVAQAEGAGLNPLLAAYLKAAAGGGVRWAFPKLVSSTV</sequence>
<feature type="chain" id="PRO_0000438205" description="PKS-NRPS hybrid synthetase cheA">
    <location>
        <begin position="1"/>
        <end position="4699"/>
    </location>
</feature>
<feature type="domain" description="Ketosynthase family 3 (KS3)" evidence="3">
    <location>
        <begin position="737"/>
        <end position="1138"/>
    </location>
</feature>
<feature type="domain" description="PKS/mFAS DH" evidence="4">
    <location>
        <begin position="1644"/>
        <end position="1947"/>
    </location>
</feature>
<feature type="domain" description="Carrier 1" evidence="2">
    <location>
        <begin position="3076"/>
        <end position="3153"/>
    </location>
</feature>
<feature type="domain" description="Carrier 2" evidence="2">
    <location>
        <begin position="4236"/>
        <end position="4316"/>
    </location>
</feature>
<feature type="region of interest" description="Disordered" evidence="5">
    <location>
        <begin position="1"/>
        <end position="38"/>
    </location>
</feature>
<feature type="region of interest" description="Disordered" evidence="5">
    <location>
        <begin position="136"/>
        <end position="165"/>
    </location>
</feature>
<feature type="region of interest" description="N-terminal acylcarrier protein transacylase domain (SAT)" evidence="1">
    <location>
        <begin position="172"/>
        <end position="520"/>
    </location>
</feature>
<feature type="region of interest" description="Disordered" evidence="5">
    <location>
        <begin position="625"/>
        <end position="836"/>
    </location>
</feature>
<feature type="region of interest" description="Malonyl-CoA:ACP transacylase (MAT) domain" evidence="1">
    <location>
        <begin position="1250"/>
        <end position="1573"/>
    </location>
</feature>
<feature type="region of interest" description="N-terminal hotdog fold" evidence="4">
    <location>
        <begin position="1644"/>
        <end position="1777"/>
    </location>
</feature>
<feature type="region of interest" description="Dehydratase (DH) domain" evidence="1">
    <location>
        <begin position="1645"/>
        <end position="1941"/>
    </location>
</feature>
<feature type="region of interest" description="C-terminal hotdog fold" evidence="4">
    <location>
        <begin position="1794"/>
        <end position="1947"/>
    </location>
</feature>
<feature type="region of interest" description="Methyltransferase (MT) domain" evidence="1">
    <location>
        <begin position="2050"/>
        <end position="2241"/>
    </location>
</feature>
<feature type="region of interest" description="Ketoreductase (KR) domain" evidence="1">
    <location>
        <begin position="2794"/>
        <end position="2967"/>
    </location>
</feature>
<feature type="region of interest" description="Disordered" evidence="5">
    <location>
        <begin position="3164"/>
        <end position="3265"/>
    </location>
</feature>
<feature type="region of interest" description="Condensation (C) domain" evidence="1">
    <location>
        <begin position="3268"/>
        <end position="3696"/>
    </location>
</feature>
<feature type="region of interest" description="Adenylation (A) domain" evidence="1">
    <location>
        <begin position="3730"/>
        <end position="4113"/>
    </location>
</feature>
<feature type="region of interest" description="Thiolation and peptide carrier (T) domain" evidence="1">
    <location>
        <begin position="4241"/>
        <end position="4313"/>
    </location>
</feature>
<feature type="region of interest" description="Reductase (R) domain" evidence="1">
    <location>
        <begin position="4367"/>
        <end position="4598"/>
    </location>
</feature>
<feature type="compositionally biased region" description="Acidic residues" evidence="5">
    <location>
        <begin position="1"/>
        <end position="21"/>
    </location>
</feature>
<feature type="compositionally biased region" description="Basic and acidic residues" evidence="5">
    <location>
        <begin position="136"/>
        <end position="148"/>
    </location>
</feature>
<feature type="compositionally biased region" description="Low complexity" evidence="5">
    <location>
        <begin position="674"/>
        <end position="688"/>
    </location>
</feature>
<feature type="compositionally biased region" description="Basic residues" evidence="5">
    <location>
        <begin position="724"/>
        <end position="737"/>
    </location>
</feature>
<feature type="compositionally biased region" description="Low complexity" evidence="5">
    <location>
        <begin position="764"/>
        <end position="777"/>
    </location>
</feature>
<feature type="compositionally biased region" description="Polar residues" evidence="5">
    <location>
        <begin position="802"/>
        <end position="816"/>
    </location>
</feature>
<feature type="compositionally biased region" description="Polar residues" evidence="5">
    <location>
        <begin position="3200"/>
        <end position="3209"/>
    </location>
</feature>
<feature type="compositionally biased region" description="Polar residues" evidence="5">
    <location>
        <begin position="3218"/>
        <end position="3233"/>
    </location>
</feature>
<feature type="active site" description="For beta-ketoacyl synthase activity" evidence="3">
    <location>
        <position position="873"/>
    </location>
</feature>
<feature type="active site" description="For beta-ketoacyl synthase activity" evidence="3">
    <location>
        <position position="1012"/>
    </location>
</feature>
<feature type="active site" description="For beta-ketoacyl synthase activity" evidence="3">
    <location>
        <position position="1058"/>
    </location>
</feature>
<feature type="active site" description="Proton acceptor; for dehydratase activity" evidence="4">
    <location>
        <position position="1676"/>
    </location>
</feature>
<feature type="active site" description="Proton donor; for dehydratase activity" evidence="4">
    <location>
        <position position="1854"/>
    </location>
</feature>
<feature type="modified residue" description="O-(pantetheine 4'-phosphoryl)serine" evidence="2">
    <location>
        <position position="3113"/>
    </location>
</feature>
<feature type="modified residue" description="O-(pantetheine 4'-phosphoryl)serine" evidence="2">
    <location>
        <position position="4276"/>
    </location>
</feature>
<dbReference type="EC" id="2.3.1.-" evidence="11"/>
<dbReference type="EC" id="6.3.2.-" evidence="11"/>
<dbReference type="EMBL" id="CH408029">
    <property type="protein sequence ID" value="EAQ93004.1"/>
    <property type="molecule type" value="Genomic_DNA"/>
</dbReference>
<dbReference type="RefSeq" id="XP_001220460.1">
    <property type="nucleotide sequence ID" value="XM_001220459.1"/>
</dbReference>
<dbReference type="SMR" id="Q2HEW5"/>
<dbReference type="GeneID" id="4387645"/>
<dbReference type="VEuPathDB" id="FungiDB:CHGG_01239"/>
<dbReference type="eggNOG" id="KOG1178">
    <property type="taxonomic scope" value="Eukaryota"/>
</dbReference>
<dbReference type="eggNOG" id="KOG1202">
    <property type="taxonomic scope" value="Eukaryota"/>
</dbReference>
<dbReference type="HOGENOM" id="CLU_000022_37_5_1"/>
<dbReference type="InParanoid" id="Q2HEW5"/>
<dbReference type="OMA" id="VAQFGSH"/>
<dbReference type="OrthoDB" id="329835at2759"/>
<dbReference type="BioCyc" id="MetaCyc:MONOMER-19094"/>
<dbReference type="Proteomes" id="UP000001056">
    <property type="component" value="Unassembled WGS sequence"/>
</dbReference>
<dbReference type="GO" id="GO:0004315">
    <property type="term" value="F:3-oxoacyl-[acyl-carrier-protein] synthase activity"/>
    <property type="evidence" value="ECO:0007669"/>
    <property type="project" value="InterPro"/>
</dbReference>
<dbReference type="GO" id="GO:0004312">
    <property type="term" value="F:fatty acid synthase activity"/>
    <property type="evidence" value="ECO:0007669"/>
    <property type="project" value="TreeGrafter"/>
</dbReference>
<dbReference type="GO" id="GO:0016853">
    <property type="term" value="F:isomerase activity"/>
    <property type="evidence" value="ECO:0007669"/>
    <property type="project" value="UniProtKB-KW"/>
</dbReference>
<dbReference type="GO" id="GO:0016874">
    <property type="term" value="F:ligase activity"/>
    <property type="evidence" value="ECO:0007669"/>
    <property type="project" value="UniProtKB-KW"/>
</dbReference>
<dbReference type="GO" id="GO:0008168">
    <property type="term" value="F:methyltransferase activity"/>
    <property type="evidence" value="ECO:0007669"/>
    <property type="project" value="UniProtKB-KW"/>
</dbReference>
<dbReference type="GO" id="GO:0016491">
    <property type="term" value="F:oxidoreductase activity"/>
    <property type="evidence" value="ECO:0007669"/>
    <property type="project" value="UniProtKB-KW"/>
</dbReference>
<dbReference type="GO" id="GO:0031177">
    <property type="term" value="F:phosphopantetheine binding"/>
    <property type="evidence" value="ECO:0007669"/>
    <property type="project" value="InterPro"/>
</dbReference>
<dbReference type="GO" id="GO:0006633">
    <property type="term" value="P:fatty acid biosynthetic process"/>
    <property type="evidence" value="ECO:0007669"/>
    <property type="project" value="InterPro"/>
</dbReference>
<dbReference type="GO" id="GO:0032259">
    <property type="term" value="P:methylation"/>
    <property type="evidence" value="ECO:0007669"/>
    <property type="project" value="UniProtKB-KW"/>
</dbReference>
<dbReference type="GO" id="GO:0009403">
    <property type="term" value="P:toxin biosynthetic process"/>
    <property type="evidence" value="ECO:0007669"/>
    <property type="project" value="UniProtKB-ARBA"/>
</dbReference>
<dbReference type="CDD" id="cd05930">
    <property type="entry name" value="A_NRPS"/>
    <property type="match status" value="1"/>
</dbReference>
<dbReference type="CDD" id="cd02440">
    <property type="entry name" value="AdoMet_MTases"/>
    <property type="match status" value="1"/>
</dbReference>
<dbReference type="CDD" id="cd19532">
    <property type="entry name" value="C_PKS-NRPS"/>
    <property type="match status" value="1"/>
</dbReference>
<dbReference type="CDD" id="cd00833">
    <property type="entry name" value="PKS"/>
    <property type="match status" value="1"/>
</dbReference>
<dbReference type="Gene3D" id="3.30.300.30">
    <property type="match status" value="1"/>
</dbReference>
<dbReference type="Gene3D" id="3.30.70.3290">
    <property type="match status" value="1"/>
</dbReference>
<dbReference type="Gene3D" id="3.40.47.10">
    <property type="match status" value="1"/>
</dbReference>
<dbReference type="Gene3D" id="3.40.50.980">
    <property type="match status" value="1"/>
</dbReference>
<dbReference type="Gene3D" id="1.10.1200.10">
    <property type="entry name" value="ACP-like"/>
    <property type="match status" value="2"/>
</dbReference>
<dbReference type="Gene3D" id="3.30.559.10">
    <property type="entry name" value="Chloramphenicol acetyltransferase-like domain"/>
    <property type="match status" value="1"/>
</dbReference>
<dbReference type="Gene3D" id="2.30.38.10">
    <property type="entry name" value="Luciferase, Domain 3"/>
    <property type="match status" value="1"/>
</dbReference>
<dbReference type="Gene3D" id="3.40.366.10">
    <property type="entry name" value="Malonyl-Coenzyme A Acyl Carrier Protein, domain 2"/>
    <property type="match status" value="1"/>
</dbReference>
<dbReference type="Gene3D" id="3.40.50.12780">
    <property type="entry name" value="N-terminal domain of ligase-like"/>
    <property type="match status" value="1"/>
</dbReference>
<dbReference type="Gene3D" id="3.40.50.720">
    <property type="entry name" value="NAD(P)-binding Rossmann-like Domain"/>
    <property type="match status" value="2"/>
</dbReference>
<dbReference type="Gene3D" id="3.30.559.30">
    <property type="entry name" value="Nonribosomal peptide synthetase, condensation domain"/>
    <property type="match status" value="1"/>
</dbReference>
<dbReference type="Gene3D" id="3.10.129.110">
    <property type="entry name" value="Polyketide synthase dehydratase"/>
    <property type="match status" value="1"/>
</dbReference>
<dbReference type="Gene3D" id="3.40.50.150">
    <property type="entry name" value="Vaccinia Virus protein VP39"/>
    <property type="match status" value="1"/>
</dbReference>
<dbReference type="InterPro" id="IPR001227">
    <property type="entry name" value="Ac_transferase_dom_sf"/>
</dbReference>
<dbReference type="InterPro" id="IPR036736">
    <property type="entry name" value="ACP-like_sf"/>
</dbReference>
<dbReference type="InterPro" id="IPR014043">
    <property type="entry name" value="Acyl_transferase_dom"/>
</dbReference>
<dbReference type="InterPro" id="IPR016035">
    <property type="entry name" value="Acyl_Trfase/lysoPLipase"/>
</dbReference>
<dbReference type="InterPro" id="IPR045851">
    <property type="entry name" value="AMP-bd_C_sf"/>
</dbReference>
<dbReference type="InterPro" id="IPR000873">
    <property type="entry name" value="AMP-dep_synth/lig_dom"/>
</dbReference>
<dbReference type="InterPro" id="IPR042099">
    <property type="entry name" value="ANL_N_sf"/>
</dbReference>
<dbReference type="InterPro" id="IPR023213">
    <property type="entry name" value="CAT-like_dom_sf"/>
</dbReference>
<dbReference type="InterPro" id="IPR001242">
    <property type="entry name" value="Condensatn"/>
</dbReference>
<dbReference type="InterPro" id="IPR013120">
    <property type="entry name" value="Far_NAD-bd"/>
</dbReference>
<dbReference type="InterPro" id="IPR018201">
    <property type="entry name" value="Ketoacyl_synth_AS"/>
</dbReference>
<dbReference type="InterPro" id="IPR014031">
    <property type="entry name" value="Ketoacyl_synth_C"/>
</dbReference>
<dbReference type="InterPro" id="IPR014030">
    <property type="entry name" value="Ketoacyl_synth_N"/>
</dbReference>
<dbReference type="InterPro" id="IPR016036">
    <property type="entry name" value="Malonyl_transacylase_ACP-bd"/>
</dbReference>
<dbReference type="InterPro" id="IPR013217">
    <property type="entry name" value="Methyltransf_12"/>
</dbReference>
<dbReference type="InterPro" id="IPR018289">
    <property type="entry name" value="MULE_transposase_dom"/>
</dbReference>
<dbReference type="InterPro" id="IPR036291">
    <property type="entry name" value="NAD(P)-bd_dom_sf"/>
</dbReference>
<dbReference type="InterPro" id="IPR020841">
    <property type="entry name" value="PKS_Beta-ketoAc_synthase_dom"/>
</dbReference>
<dbReference type="InterPro" id="IPR042104">
    <property type="entry name" value="PKS_dehydratase_sf"/>
</dbReference>
<dbReference type="InterPro" id="IPR020807">
    <property type="entry name" value="PKS_DH"/>
</dbReference>
<dbReference type="InterPro" id="IPR049551">
    <property type="entry name" value="PKS_DH_C"/>
</dbReference>
<dbReference type="InterPro" id="IPR049552">
    <property type="entry name" value="PKS_DH_N"/>
</dbReference>
<dbReference type="InterPro" id="IPR013968">
    <property type="entry name" value="PKS_KR"/>
</dbReference>
<dbReference type="InterPro" id="IPR049900">
    <property type="entry name" value="PKS_mFAS_DH"/>
</dbReference>
<dbReference type="InterPro" id="IPR050091">
    <property type="entry name" value="PKS_NRPS_Biosynth_Enz"/>
</dbReference>
<dbReference type="InterPro" id="IPR020806">
    <property type="entry name" value="PKS_PP-bd"/>
</dbReference>
<dbReference type="InterPro" id="IPR009081">
    <property type="entry name" value="PP-bd_ACP"/>
</dbReference>
<dbReference type="InterPro" id="IPR006162">
    <property type="entry name" value="Ppantetheine_attach_site"/>
</dbReference>
<dbReference type="InterPro" id="IPR054514">
    <property type="entry name" value="RhiE-like_linker"/>
</dbReference>
<dbReference type="InterPro" id="IPR029063">
    <property type="entry name" value="SAM-dependent_MTases_sf"/>
</dbReference>
<dbReference type="InterPro" id="IPR016039">
    <property type="entry name" value="Thiolase-like"/>
</dbReference>
<dbReference type="PANTHER" id="PTHR43775">
    <property type="entry name" value="FATTY ACID SYNTHASE"/>
    <property type="match status" value="1"/>
</dbReference>
<dbReference type="PANTHER" id="PTHR43775:SF20">
    <property type="entry name" value="HYBRID PKS-NRPS SYNTHETASE APDA"/>
    <property type="match status" value="1"/>
</dbReference>
<dbReference type="Pfam" id="PF00698">
    <property type="entry name" value="Acyl_transf_1"/>
    <property type="match status" value="1"/>
</dbReference>
<dbReference type="Pfam" id="PF00501">
    <property type="entry name" value="AMP-binding"/>
    <property type="match status" value="2"/>
</dbReference>
<dbReference type="Pfam" id="PF00668">
    <property type="entry name" value="Condensation"/>
    <property type="match status" value="1"/>
</dbReference>
<dbReference type="Pfam" id="PF00109">
    <property type="entry name" value="ketoacyl-synt"/>
    <property type="match status" value="1"/>
</dbReference>
<dbReference type="Pfam" id="PF02801">
    <property type="entry name" value="Ketoacyl-synt_C"/>
    <property type="match status" value="1"/>
</dbReference>
<dbReference type="Pfam" id="PF08659">
    <property type="entry name" value="KR"/>
    <property type="match status" value="1"/>
</dbReference>
<dbReference type="Pfam" id="PF08242">
    <property type="entry name" value="Methyltransf_12"/>
    <property type="match status" value="1"/>
</dbReference>
<dbReference type="Pfam" id="PF10551">
    <property type="entry name" value="MULE"/>
    <property type="match status" value="1"/>
</dbReference>
<dbReference type="Pfam" id="PF07993">
    <property type="entry name" value="NAD_binding_4"/>
    <property type="match status" value="1"/>
</dbReference>
<dbReference type="Pfam" id="PF21089">
    <property type="entry name" value="PKS_DH_N"/>
    <property type="match status" value="1"/>
</dbReference>
<dbReference type="Pfam" id="PF00550">
    <property type="entry name" value="PP-binding"/>
    <property type="match status" value="2"/>
</dbReference>
<dbReference type="Pfam" id="PF14765">
    <property type="entry name" value="PS-DH"/>
    <property type="match status" value="1"/>
</dbReference>
<dbReference type="Pfam" id="PF22336">
    <property type="entry name" value="RhiE-like_linker"/>
    <property type="match status" value="1"/>
</dbReference>
<dbReference type="SMART" id="SM00827">
    <property type="entry name" value="PKS_AT"/>
    <property type="match status" value="1"/>
</dbReference>
<dbReference type="SMART" id="SM00826">
    <property type="entry name" value="PKS_DH"/>
    <property type="match status" value="1"/>
</dbReference>
<dbReference type="SMART" id="SM00822">
    <property type="entry name" value="PKS_KR"/>
    <property type="match status" value="1"/>
</dbReference>
<dbReference type="SMART" id="SM00825">
    <property type="entry name" value="PKS_KS"/>
    <property type="match status" value="1"/>
</dbReference>
<dbReference type="SMART" id="SM00823">
    <property type="entry name" value="PKS_PP"/>
    <property type="match status" value="2"/>
</dbReference>
<dbReference type="SUPFAM" id="SSF56801">
    <property type="entry name" value="Acetyl-CoA synthetase-like"/>
    <property type="match status" value="1"/>
</dbReference>
<dbReference type="SUPFAM" id="SSF47336">
    <property type="entry name" value="ACP-like"/>
    <property type="match status" value="2"/>
</dbReference>
<dbReference type="SUPFAM" id="SSF52777">
    <property type="entry name" value="CoA-dependent acyltransferases"/>
    <property type="match status" value="2"/>
</dbReference>
<dbReference type="SUPFAM" id="SSF52151">
    <property type="entry name" value="FabD/lysophospholipase-like"/>
    <property type="match status" value="1"/>
</dbReference>
<dbReference type="SUPFAM" id="SSF51735">
    <property type="entry name" value="NAD(P)-binding Rossmann-fold domains"/>
    <property type="match status" value="2"/>
</dbReference>
<dbReference type="SUPFAM" id="SSF55048">
    <property type="entry name" value="Probable ACP-binding domain of malonyl-CoA ACP transacylase"/>
    <property type="match status" value="1"/>
</dbReference>
<dbReference type="SUPFAM" id="SSF53335">
    <property type="entry name" value="S-adenosyl-L-methionine-dependent methyltransferases"/>
    <property type="match status" value="1"/>
</dbReference>
<dbReference type="SUPFAM" id="SSF53901">
    <property type="entry name" value="Thiolase-like"/>
    <property type="match status" value="2"/>
</dbReference>
<dbReference type="PROSITE" id="PS50075">
    <property type="entry name" value="CARRIER"/>
    <property type="match status" value="2"/>
</dbReference>
<dbReference type="PROSITE" id="PS00606">
    <property type="entry name" value="KS3_1"/>
    <property type="match status" value="1"/>
</dbReference>
<dbReference type="PROSITE" id="PS52004">
    <property type="entry name" value="KS3_2"/>
    <property type="match status" value="1"/>
</dbReference>
<dbReference type="PROSITE" id="PS00012">
    <property type="entry name" value="PHOSPHOPANTETHEINE"/>
    <property type="match status" value="1"/>
</dbReference>
<dbReference type="PROSITE" id="PS52019">
    <property type="entry name" value="PKS_MFAS_DH"/>
    <property type="match status" value="1"/>
</dbReference>
<accession>Q2HEW5</accession>